<proteinExistence type="evidence at protein level"/>
<reference key="1">
    <citation type="journal article" date="2004" name="Nat. Genet.">
        <title>Complete sequencing and characterization of 21,243 full-length human cDNAs.</title>
        <authorList>
            <person name="Ota T."/>
            <person name="Suzuki Y."/>
            <person name="Nishikawa T."/>
            <person name="Otsuki T."/>
            <person name="Sugiyama T."/>
            <person name="Irie R."/>
            <person name="Wakamatsu A."/>
            <person name="Hayashi K."/>
            <person name="Sato H."/>
            <person name="Nagai K."/>
            <person name="Kimura K."/>
            <person name="Makita H."/>
            <person name="Sekine M."/>
            <person name="Obayashi M."/>
            <person name="Nishi T."/>
            <person name="Shibahara T."/>
            <person name="Tanaka T."/>
            <person name="Ishii S."/>
            <person name="Yamamoto J."/>
            <person name="Saito K."/>
            <person name="Kawai Y."/>
            <person name="Isono Y."/>
            <person name="Nakamura Y."/>
            <person name="Nagahari K."/>
            <person name="Murakami K."/>
            <person name="Yasuda T."/>
            <person name="Iwayanagi T."/>
            <person name="Wagatsuma M."/>
            <person name="Shiratori A."/>
            <person name="Sudo H."/>
            <person name="Hosoiri T."/>
            <person name="Kaku Y."/>
            <person name="Kodaira H."/>
            <person name="Kondo H."/>
            <person name="Sugawara M."/>
            <person name="Takahashi M."/>
            <person name="Kanda K."/>
            <person name="Yokoi T."/>
            <person name="Furuya T."/>
            <person name="Kikkawa E."/>
            <person name="Omura Y."/>
            <person name="Abe K."/>
            <person name="Kamihara K."/>
            <person name="Katsuta N."/>
            <person name="Sato K."/>
            <person name="Tanikawa M."/>
            <person name="Yamazaki M."/>
            <person name="Ninomiya K."/>
            <person name="Ishibashi T."/>
            <person name="Yamashita H."/>
            <person name="Murakawa K."/>
            <person name="Fujimori K."/>
            <person name="Tanai H."/>
            <person name="Kimata M."/>
            <person name="Watanabe M."/>
            <person name="Hiraoka S."/>
            <person name="Chiba Y."/>
            <person name="Ishida S."/>
            <person name="Ono Y."/>
            <person name="Takiguchi S."/>
            <person name="Watanabe S."/>
            <person name="Yosida M."/>
            <person name="Hotuta T."/>
            <person name="Kusano J."/>
            <person name="Kanehori K."/>
            <person name="Takahashi-Fujii A."/>
            <person name="Hara H."/>
            <person name="Tanase T.-O."/>
            <person name="Nomura Y."/>
            <person name="Togiya S."/>
            <person name="Komai F."/>
            <person name="Hara R."/>
            <person name="Takeuchi K."/>
            <person name="Arita M."/>
            <person name="Imose N."/>
            <person name="Musashino K."/>
            <person name="Yuuki H."/>
            <person name="Oshima A."/>
            <person name="Sasaki N."/>
            <person name="Aotsuka S."/>
            <person name="Yoshikawa Y."/>
            <person name="Matsunawa H."/>
            <person name="Ichihara T."/>
            <person name="Shiohata N."/>
            <person name="Sano S."/>
            <person name="Moriya S."/>
            <person name="Momiyama H."/>
            <person name="Satoh N."/>
            <person name="Takami S."/>
            <person name="Terashima Y."/>
            <person name="Suzuki O."/>
            <person name="Nakagawa S."/>
            <person name="Senoh A."/>
            <person name="Mizoguchi H."/>
            <person name="Goto Y."/>
            <person name="Shimizu F."/>
            <person name="Wakebe H."/>
            <person name="Hishigaki H."/>
            <person name="Watanabe T."/>
            <person name="Sugiyama A."/>
            <person name="Takemoto M."/>
            <person name="Kawakami B."/>
            <person name="Yamazaki M."/>
            <person name="Watanabe K."/>
            <person name="Kumagai A."/>
            <person name="Itakura S."/>
            <person name="Fukuzumi Y."/>
            <person name="Fujimori Y."/>
            <person name="Komiyama M."/>
            <person name="Tashiro H."/>
            <person name="Tanigami A."/>
            <person name="Fujiwara T."/>
            <person name="Ono T."/>
            <person name="Yamada K."/>
            <person name="Fujii Y."/>
            <person name="Ozaki K."/>
            <person name="Hirao M."/>
            <person name="Ohmori Y."/>
            <person name="Kawabata A."/>
            <person name="Hikiji T."/>
            <person name="Kobatake N."/>
            <person name="Inagaki H."/>
            <person name="Ikema Y."/>
            <person name="Okamoto S."/>
            <person name="Okitani R."/>
            <person name="Kawakami T."/>
            <person name="Noguchi S."/>
            <person name="Itoh T."/>
            <person name="Shigeta K."/>
            <person name="Senba T."/>
            <person name="Matsumura K."/>
            <person name="Nakajima Y."/>
            <person name="Mizuno T."/>
            <person name="Morinaga M."/>
            <person name="Sasaki M."/>
            <person name="Togashi T."/>
            <person name="Oyama M."/>
            <person name="Hata H."/>
            <person name="Watanabe M."/>
            <person name="Komatsu T."/>
            <person name="Mizushima-Sugano J."/>
            <person name="Satoh T."/>
            <person name="Shirai Y."/>
            <person name="Takahashi Y."/>
            <person name="Nakagawa K."/>
            <person name="Okumura K."/>
            <person name="Nagase T."/>
            <person name="Nomura N."/>
            <person name="Kikuchi H."/>
            <person name="Masuho Y."/>
            <person name="Yamashita R."/>
            <person name="Nakai K."/>
            <person name="Yada T."/>
            <person name="Nakamura Y."/>
            <person name="Ohara O."/>
            <person name="Isogai T."/>
            <person name="Sugano S."/>
        </authorList>
    </citation>
    <scope>NUCLEOTIDE SEQUENCE [LARGE SCALE MRNA] (ISOFORM 2)</scope>
    <source>
        <tissue>Small intestine</tissue>
    </source>
</reference>
<reference key="2">
    <citation type="journal article" date="2004" name="Genome Res.">
        <title>The status, quality, and expansion of the NIH full-length cDNA project: the Mammalian Gene Collection (MGC).</title>
        <authorList>
            <consortium name="The MGC Project Team"/>
        </authorList>
    </citation>
    <scope>NUCLEOTIDE SEQUENCE [LARGE SCALE MRNA] (ISOFORMS 1 AND 3)</scope>
    <source>
        <tissue>Brain</tissue>
        <tissue>Liver</tissue>
    </source>
</reference>
<reference key="3">
    <citation type="journal article" date="2009" name="Sci. Signal.">
        <title>Quantitative phosphoproteomic analysis of T cell receptor signaling reveals system-wide modulation of protein-protein interactions.</title>
        <authorList>
            <person name="Mayya V."/>
            <person name="Lundgren D.H."/>
            <person name="Hwang S.-I."/>
            <person name="Rezaul K."/>
            <person name="Wu L."/>
            <person name="Eng J.K."/>
            <person name="Rodionov V."/>
            <person name="Han D.K."/>
        </authorList>
    </citation>
    <scope>IDENTIFICATION BY MASS SPECTROMETRY [LARGE SCALE ANALYSIS]</scope>
    <source>
        <tissue>Leukemic T-cell</tissue>
    </source>
</reference>
<reference key="4">
    <citation type="journal article" date="2013" name="J. Proteome Res.">
        <title>Toward a comprehensive characterization of a human cancer cell phosphoproteome.</title>
        <authorList>
            <person name="Zhou H."/>
            <person name="Di Palma S."/>
            <person name="Preisinger C."/>
            <person name="Peng M."/>
            <person name="Polat A.N."/>
            <person name="Heck A.J."/>
            <person name="Mohammed S."/>
        </authorList>
    </citation>
    <scope>IDENTIFICATION BY MASS SPECTROMETRY [LARGE SCALE ANALYSIS]</scope>
    <source>
        <tissue>Cervix carcinoma</tissue>
    </source>
</reference>
<evidence type="ECO:0000250" key="1"/>
<evidence type="ECO:0000303" key="2">
    <source>
    </source>
</evidence>
<evidence type="ECO:0000303" key="3">
    <source>
    </source>
</evidence>
<evidence type="ECO:0000305" key="4"/>
<evidence type="ECO:0007829" key="5">
    <source>
        <dbReference type="PDB" id="2WM8"/>
    </source>
</evidence>
<dbReference type="EC" id="3.1.3.-"/>
<dbReference type="EC" id="3.1.3.48"/>
<dbReference type="EMBL" id="AK092821">
    <property type="protein sequence ID" value="BAC03984.1"/>
    <property type="molecule type" value="mRNA"/>
</dbReference>
<dbReference type="EMBL" id="BC046912">
    <property type="protein sequence ID" value="AAH46912.1"/>
    <property type="molecule type" value="mRNA"/>
</dbReference>
<dbReference type="EMBL" id="BC051382">
    <property type="protein sequence ID" value="AAH51382.1"/>
    <property type="molecule type" value="mRNA"/>
</dbReference>
<dbReference type="CCDS" id="CCDS55908.1">
    <molecule id="Q86V88-3"/>
</dbReference>
<dbReference type="CCDS" id="CCDS9620.1">
    <molecule id="Q86V88-1"/>
</dbReference>
<dbReference type="RefSeq" id="NP_001186750.1">
    <molecule id="Q86V88-3"/>
    <property type="nucleotide sequence ID" value="NM_001199821.2"/>
</dbReference>
<dbReference type="RefSeq" id="NP_612485.2">
    <molecule id="Q86V88-1"/>
    <property type="nucleotide sequence ID" value="NM_138476.3"/>
</dbReference>
<dbReference type="PDB" id="2WM8">
    <property type="method" value="X-ray"/>
    <property type="resolution" value="1.75 A"/>
    <property type="chains" value="A=1-165"/>
</dbReference>
<dbReference type="PDBsum" id="2WM8"/>
<dbReference type="SMR" id="Q86V88"/>
<dbReference type="BioGRID" id="126921">
    <property type="interactions" value="54"/>
</dbReference>
<dbReference type="FunCoup" id="Q86V88">
    <property type="interactions" value="235"/>
</dbReference>
<dbReference type="IntAct" id="Q86V88">
    <property type="interactions" value="7"/>
</dbReference>
<dbReference type="STRING" id="9606.ENSP00000288087"/>
<dbReference type="DEPOD" id="MDP1"/>
<dbReference type="iPTMnet" id="Q86V88"/>
<dbReference type="PhosphoSitePlus" id="Q86V88"/>
<dbReference type="BioMuta" id="MDP1"/>
<dbReference type="DMDM" id="74727544"/>
<dbReference type="jPOST" id="Q86V88"/>
<dbReference type="MassIVE" id="Q86V88"/>
<dbReference type="PaxDb" id="9606-ENSP00000288087"/>
<dbReference type="PeptideAtlas" id="Q86V88"/>
<dbReference type="ProteomicsDB" id="69978">
    <molecule id="Q86V88-1"/>
</dbReference>
<dbReference type="ProteomicsDB" id="69979">
    <molecule id="Q86V88-2"/>
</dbReference>
<dbReference type="ProteomicsDB" id="69980">
    <molecule id="Q86V88-3"/>
</dbReference>
<dbReference type="Pumba" id="Q86V88"/>
<dbReference type="Antibodypedia" id="22751">
    <property type="antibodies" value="51 antibodies from 13 providers"/>
</dbReference>
<dbReference type="DNASU" id="145553"/>
<dbReference type="Ensembl" id="ENST00000288087.12">
    <molecule id="Q86V88-1"/>
    <property type="protein sequence ID" value="ENSP00000288087.7"/>
    <property type="gene ID" value="ENSG00000213920.9"/>
</dbReference>
<dbReference type="Ensembl" id="ENST00000396833.2">
    <molecule id="Q86V88-3"/>
    <property type="protein sequence ID" value="ENSP00000380045.2"/>
    <property type="gene ID" value="ENSG00000213920.9"/>
</dbReference>
<dbReference type="Ensembl" id="ENST00000644853.1">
    <molecule id="Q86V88-3"/>
    <property type="protein sequence ID" value="ENSP00000493831.1"/>
    <property type="gene ID" value="ENSG00000285200.2"/>
</dbReference>
<dbReference type="Ensembl" id="ENST00000646165.2">
    <molecule id="Q86V88-1"/>
    <property type="protein sequence ID" value="ENSP00000494235.1"/>
    <property type="gene ID" value="ENSG00000285200.2"/>
</dbReference>
<dbReference type="GeneID" id="145553"/>
<dbReference type="KEGG" id="hsa:145553"/>
<dbReference type="MANE-Select" id="ENST00000288087.12">
    <property type="protein sequence ID" value="ENSP00000288087.7"/>
    <property type="RefSeq nucleotide sequence ID" value="NM_138476.4"/>
    <property type="RefSeq protein sequence ID" value="NP_612485.2"/>
</dbReference>
<dbReference type="UCSC" id="uc001wnl.3">
    <molecule id="Q86V88-1"/>
    <property type="organism name" value="human"/>
</dbReference>
<dbReference type="AGR" id="HGNC:28781"/>
<dbReference type="CTD" id="145553"/>
<dbReference type="DisGeNET" id="145553"/>
<dbReference type="GeneCards" id="MDP1"/>
<dbReference type="HGNC" id="HGNC:28781">
    <property type="gene designation" value="MDP1"/>
</dbReference>
<dbReference type="HPA" id="ENSG00000213920">
    <property type="expression patterns" value="Low tissue specificity"/>
</dbReference>
<dbReference type="neXtProt" id="NX_Q86V88"/>
<dbReference type="OpenTargets" id="ENSG00000213920"/>
<dbReference type="PharmGKB" id="PA165479165"/>
<dbReference type="VEuPathDB" id="HostDB:ENSG00000213920"/>
<dbReference type="eggNOG" id="KOG4549">
    <property type="taxonomic scope" value="Eukaryota"/>
</dbReference>
<dbReference type="GeneTree" id="ENSGT00390000004110"/>
<dbReference type="HOGENOM" id="CLU_071162_0_0_1"/>
<dbReference type="InParanoid" id="Q86V88"/>
<dbReference type="OMA" id="GVWAWRK"/>
<dbReference type="OrthoDB" id="2865258at2759"/>
<dbReference type="PAN-GO" id="Q86V88">
    <property type="GO annotations" value="1 GO annotation based on evolutionary models"/>
</dbReference>
<dbReference type="PhylomeDB" id="Q86V88"/>
<dbReference type="TreeFam" id="TF328413"/>
<dbReference type="PathwayCommons" id="Q86V88"/>
<dbReference type="BioGRID-ORCS" id="145553">
    <property type="hits" value="14 hits in 1158 CRISPR screens"/>
</dbReference>
<dbReference type="EvolutionaryTrace" id="Q86V88"/>
<dbReference type="GenomeRNAi" id="145553"/>
<dbReference type="Pharos" id="Q86V88">
    <property type="development level" value="Tbio"/>
</dbReference>
<dbReference type="PRO" id="PR:Q86V88"/>
<dbReference type="Proteomes" id="UP000005640">
    <property type="component" value="Chromosome 14"/>
</dbReference>
<dbReference type="RNAct" id="Q86V88">
    <property type="molecule type" value="protein"/>
</dbReference>
<dbReference type="Bgee" id="ENSG00000213920">
    <property type="expression patterns" value="Expressed in male germ line stem cell (sensu Vertebrata) in testis and 96 other cell types or tissues"/>
</dbReference>
<dbReference type="GO" id="GO:0003993">
    <property type="term" value="F:acid phosphatase activity"/>
    <property type="evidence" value="ECO:0000318"/>
    <property type="project" value="GO_Central"/>
</dbReference>
<dbReference type="GO" id="GO:0046872">
    <property type="term" value="F:metal ion binding"/>
    <property type="evidence" value="ECO:0007669"/>
    <property type="project" value="UniProtKB-KW"/>
</dbReference>
<dbReference type="GO" id="GO:0004725">
    <property type="term" value="F:protein tyrosine phosphatase activity"/>
    <property type="evidence" value="ECO:0007669"/>
    <property type="project" value="UniProtKB-EC"/>
</dbReference>
<dbReference type="CDD" id="cd07501">
    <property type="entry name" value="HAD_MDP-1_like"/>
    <property type="match status" value="1"/>
</dbReference>
<dbReference type="FunFam" id="3.40.50.1000:FF:000127">
    <property type="entry name" value="Magnesium-dependent phosphatase 1"/>
    <property type="match status" value="1"/>
</dbReference>
<dbReference type="Gene3D" id="3.40.50.1000">
    <property type="entry name" value="HAD superfamily/HAD-like"/>
    <property type="match status" value="1"/>
</dbReference>
<dbReference type="InterPro" id="IPR036412">
    <property type="entry name" value="HAD-like_sf"/>
</dbReference>
<dbReference type="InterPro" id="IPR023214">
    <property type="entry name" value="HAD_sf"/>
</dbReference>
<dbReference type="InterPro" id="IPR010033">
    <property type="entry name" value="HAD_SF_ppase_IIIC"/>
</dbReference>
<dbReference type="InterPro" id="IPR035679">
    <property type="entry name" value="MDP-1_euk"/>
</dbReference>
<dbReference type="InterPro" id="IPR010036">
    <property type="entry name" value="MDP_1_eu_arc"/>
</dbReference>
<dbReference type="NCBIfam" id="TIGR01681">
    <property type="entry name" value="HAD-SF-IIIC"/>
    <property type="match status" value="1"/>
</dbReference>
<dbReference type="NCBIfam" id="TIGR01685">
    <property type="entry name" value="MDP-1"/>
    <property type="match status" value="1"/>
</dbReference>
<dbReference type="PANTHER" id="PTHR17901:SF14">
    <property type="entry name" value="MAGNESIUM-DEPENDENT PHOSPHATASE 1"/>
    <property type="match status" value="1"/>
</dbReference>
<dbReference type="PANTHER" id="PTHR17901">
    <property type="entry name" value="MAGNESIUM-DEPENDENT PHOSPHATASE 1 MDP1"/>
    <property type="match status" value="1"/>
</dbReference>
<dbReference type="Pfam" id="PF12689">
    <property type="entry name" value="Acid_PPase"/>
    <property type="match status" value="1"/>
</dbReference>
<dbReference type="SFLD" id="SFLDG01129">
    <property type="entry name" value="C1.5:_HAD__Beta-PGM__Phosphata"/>
    <property type="match status" value="1"/>
</dbReference>
<dbReference type="SFLD" id="SFLDF00041">
    <property type="entry name" value="mdp-1"/>
    <property type="match status" value="1"/>
</dbReference>
<dbReference type="SUPFAM" id="SSF56784">
    <property type="entry name" value="HAD-like"/>
    <property type="match status" value="1"/>
</dbReference>
<comment type="function">
    <text evidence="1">Magnesium-dependent phosphatase which may act as a tyrosine phosphatase.</text>
</comment>
<comment type="catalytic activity">
    <reaction>
        <text>O-phospho-L-tyrosyl-[protein] + H2O = L-tyrosyl-[protein] + phosphate</text>
        <dbReference type="Rhea" id="RHEA:10684"/>
        <dbReference type="Rhea" id="RHEA-COMP:10136"/>
        <dbReference type="Rhea" id="RHEA-COMP:20101"/>
        <dbReference type="ChEBI" id="CHEBI:15377"/>
        <dbReference type="ChEBI" id="CHEBI:43474"/>
        <dbReference type="ChEBI" id="CHEBI:46858"/>
        <dbReference type="ChEBI" id="CHEBI:61978"/>
        <dbReference type="EC" id="3.1.3.48"/>
    </reaction>
</comment>
<comment type="cofactor">
    <cofactor evidence="1">
        <name>Mg(2+)</name>
        <dbReference type="ChEBI" id="CHEBI:18420"/>
    </cofactor>
</comment>
<comment type="activity regulation">
    <text evidence="1">Inhibited by vanadate and zinc, and slightly by calcium.</text>
</comment>
<comment type="alternative products">
    <event type="alternative splicing"/>
    <isoform>
        <id>Q86V88-1</id>
        <name>1</name>
        <sequence type="displayed"/>
    </isoform>
    <isoform>
        <id>Q86V88-2</id>
        <name>2</name>
        <sequence type="described" ref="VSP_015986 VSP_015987"/>
    </isoform>
    <isoform>
        <id>Q86V88-3</id>
        <name>3</name>
        <sequence type="described" ref="VSP_015985 VSP_015988"/>
    </isoform>
</comment>
<comment type="similarity">
    <text evidence="4">Belongs to the HAD-like hydrolase superfamily.</text>
</comment>
<sequence>MARLPKLAVFDLDYTLWPFWVDTHVDPPFHKSSDGTVRDRRGQDVRLYPEVPEVLKRLQSLGVPGAAASRTSEIEGANQLLELFDLFRYFVHREIYPGSKITHFERLQQKTGIPFSQMIFFDDERRNIVDVSKLGVTCIHIQNGMNLQTLSQGLETFAKAQTGPLRSSLEESPFEA</sequence>
<organism>
    <name type="scientific">Homo sapiens</name>
    <name type="common">Human</name>
    <dbReference type="NCBI Taxonomy" id="9606"/>
    <lineage>
        <taxon>Eukaryota</taxon>
        <taxon>Metazoa</taxon>
        <taxon>Chordata</taxon>
        <taxon>Craniata</taxon>
        <taxon>Vertebrata</taxon>
        <taxon>Euteleostomi</taxon>
        <taxon>Mammalia</taxon>
        <taxon>Eutheria</taxon>
        <taxon>Euarchontoglires</taxon>
        <taxon>Primates</taxon>
        <taxon>Haplorrhini</taxon>
        <taxon>Catarrhini</taxon>
        <taxon>Hominidae</taxon>
        <taxon>Homo</taxon>
    </lineage>
</organism>
<gene>
    <name type="primary">MDP1</name>
</gene>
<name>MGDP1_HUMAN</name>
<protein>
    <recommendedName>
        <fullName>Magnesium-dependent phosphatase 1</fullName>
        <shortName>MDP-1</shortName>
        <ecNumber>3.1.3.-</ecNumber>
        <ecNumber>3.1.3.48</ecNumber>
    </recommendedName>
</protein>
<accession>Q86V88</accession>
<accession>Q86Y84</accession>
<accession>Q8NAD9</accession>
<feature type="chain" id="PRO_0000068827" description="Magnesium-dependent phosphatase 1">
    <location>
        <begin position="1"/>
        <end position="176"/>
    </location>
</feature>
<feature type="active site" description="Nucleophile" evidence="1">
    <location>
        <position position="11"/>
    </location>
</feature>
<feature type="active site" description="Proton donor" evidence="1">
    <location>
        <position position="13"/>
    </location>
</feature>
<feature type="binding site" evidence="1">
    <location>
        <position position="11"/>
    </location>
    <ligand>
        <name>Mg(2+)</name>
        <dbReference type="ChEBI" id="CHEBI:18420"/>
    </ligand>
</feature>
<feature type="binding site" evidence="1">
    <location>
        <position position="12"/>
    </location>
    <ligand>
        <name>phosphate</name>
        <dbReference type="ChEBI" id="CHEBI:43474"/>
    </ligand>
</feature>
<feature type="binding site" evidence="1">
    <location>
        <position position="13"/>
    </location>
    <ligand>
        <name>Mg(2+)</name>
        <dbReference type="ChEBI" id="CHEBI:18420"/>
    </ligand>
</feature>
<feature type="binding site" evidence="1">
    <location>
        <position position="13"/>
    </location>
    <ligand>
        <name>phosphate</name>
        <dbReference type="ChEBI" id="CHEBI:43474"/>
    </ligand>
</feature>
<feature type="binding site" evidence="1">
    <location>
        <position position="20"/>
    </location>
    <ligand>
        <name>substrate</name>
    </ligand>
</feature>
<feature type="binding site" evidence="1">
    <location>
        <position position="69"/>
    </location>
    <ligand>
        <name>phosphate</name>
        <dbReference type="ChEBI" id="CHEBI:43474"/>
    </ligand>
</feature>
<feature type="binding site" evidence="1">
    <location>
        <position position="70"/>
    </location>
    <ligand>
        <name>phosphate</name>
        <dbReference type="ChEBI" id="CHEBI:43474"/>
    </ligand>
</feature>
<feature type="binding site" evidence="1">
    <location>
        <position position="70"/>
    </location>
    <ligand>
        <name>substrate</name>
    </ligand>
</feature>
<feature type="binding site" evidence="1">
    <location>
        <position position="100"/>
    </location>
    <ligand>
        <name>phosphate</name>
        <dbReference type="ChEBI" id="CHEBI:43474"/>
    </ligand>
</feature>
<feature type="binding site" evidence="1">
    <location>
        <position position="123"/>
    </location>
    <ligand>
        <name>Mg(2+)</name>
        <dbReference type="ChEBI" id="CHEBI:18420"/>
    </ligand>
</feature>
<feature type="splice variant" id="VSP_015985" description="In isoform 3." evidence="3">
    <original>YFVHREIYPGSKITHFERLQQKTGIPFSQMIFFD</original>
    <variation>CYLHSHPEWNESSNSKSRVRDICEGPNWAFEVQP</variation>
    <location>
        <begin position="89"/>
        <end position="122"/>
    </location>
</feature>
<feature type="splice variant" id="VSP_015986" description="In isoform 2." evidence="2">
    <original>LQQKTGIPFSQMIFFDDERRN</original>
    <variation>YAEIREEQGEKVSERPGKPRY</variation>
    <location>
        <begin position="107"/>
        <end position="127"/>
    </location>
</feature>
<feature type="splice variant" id="VSP_015988" description="In isoform 3." evidence="3">
    <location>
        <begin position="123"/>
        <end position="176"/>
    </location>
</feature>
<feature type="splice variant" id="VSP_015987" description="In isoform 2." evidence="2">
    <location>
        <begin position="128"/>
        <end position="176"/>
    </location>
</feature>
<feature type="strand" evidence="5">
    <location>
        <begin position="6"/>
        <end position="10"/>
    </location>
</feature>
<feature type="turn" evidence="5">
    <location>
        <begin position="13"/>
        <end position="15"/>
    </location>
</feature>
<feature type="strand" evidence="5">
    <location>
        <begin position="16"/>
        <end position="19"/>
    </location>
</feature>
<feature type="turn" evidence="5">
    <location>
        <begin position="21"/>
        <end position="23"/>
    </location>
</feature>
<feature type="helix" evidence="5">
    <location>
        <begin position="51"/>
        <end position="61"/>
    </location>
</feature>
<feature type="strand" evidence="5">
    <location>
        <begin position="65"/>
        <end position="69"/>
    </location>
</feature>
<feature type="helix" evidence="5">
    <location>
        <begin position="74"/>
        <end position="83"/>
    </location>
</feature>
<feature type="turn" evidence="5">
    <location>
        <begin position="87"/>
        <end position="89"/>
    </location>
</feature>
<feature type="strand" evidence="5">
    <location>
        <begin position="90"/>
        <end position="98"/>
    </location>
</feature>
<feature type="helix" evidence="5">
    <location>
        <begin position="100"/>
        <end position="111"/>
    </location>
</feature>
<feature type="helix" evidence="5">
    <location>
        <begin position="115"/>
        <end position="117"/>
    </location>
</feature>
<feature type="strand" evidence="5">
    <location>
        <begin position="118"/>
        <end position="123"/>
    </location>
</feature>
<feature type="helix" evidence="5">
    <location>
        <begin position="125"/>
        <end position="132"/>
    </location>
</feature>
<feature type="turn" evidence="5">
    <location>
        <begin position="133"/>
        <end position="135"/>
    </location>
</feature>
<feature type="strand" evidence="5">
    <location>
        <begin position="137"/>
        <end position="140"/>
    </location>
</feature>
<feature type="strand" evidence="5">
    <location>
        <begin position="142"/>
        <end position="144"/>
    </location>
</feature>
<feature type="helix" evidence="5">
    <location>
        <begin position="147"/>
        <end position="159"/>
    </location>
</feature>
<keyword id="KW-0002">3D-structure</keyword>
<keyword id="KW-0025">Alternative splicing</keyword>
<keyword id="KW-0378">Hydrolase</keyword>
<keyword id="KW-0460">Magnesium</keyword>
<keyword id="KW-0479">Metal-binding</keyword>
<keyword id="KW-0904">Protein phosphatase</keyword>
<keyword id="KW-1267">Proteomics identification</keyword>
<keyword id="KW-1185">Reference proteome</keyword>